<reference key="1">
    <citation type="journal article" date="2006" name="Genome Res.">
        <title>Skewed genomic variability in strains of the toxigenic bacterial pathogen, Clostridium perfringens.</title>
        <authorList>
            <person name="Myers G.S.A."/>
            <person name="Rasko D.A."/>
            <person name="Cheung J.K."/>
            <person name="Ravel J."/>
            <person name="Seshadri R."/>
            <person name="DeBoy R.T."/>
            <person name="Ren Q."/>
            <person name="Varga J."/>
            <person name="Awad M.M."/>
            <person name="Brinkac L.M."/>
            <person name="Daugherty S.C."/>
            <person name="Haft D.H."/>
            <person name="Dodson R.J."/>
            <person name="Madupu R."/>
            <person name="Nelson W.C."/>
            <person name="Rosovitz M.J."/>
            <person name="Sullivan S.A."/>
            <person name="Khouri H."/>
            <person name="Dimitrov G.I."/>
            <person name="Watkins K.L."/>
            <person name="Mulligan S."/>
            <person name="Benton J."/>
            <person name="Radune D."/>
            <person name="Fisher D.J."/>
            <person name="Atkins H.S."/>
            <person name="Hiscox T."/>
            <person name="Jost B.H."/>
            <person name="Billington S.J."/>
            <person name="Songer J.G."/>
            <person name="McClane B.A."/>
            <person name="Titball R.W."/>
            <person name="Rood J.I."/>
            <person name="Melville S.B."/>
            <person name="Paulsen I.T."/>
        </authorList>
    </citation>
    <scope>NUCLEOTIDE SEQUENCE [LARGE SCALE GENOMIC DNA]</scope>
    <source>
        <strain>ATCC 13124 / DSM 756 / JCM 1290 / NCIMB 6125 / NCTC 8237 / S 107 / Type A</strain>
    </source>
</reference>
<keyword id="KW-0687">Ribonucleoprotein</keyword>
<keyword id="KW-0689">Ribosomal protein</keyword>
<keyword id="KW-0694">RNA-binding</keyword>
<keyword id="KW-0699">rRNA-binding</keyword>
<evidence type="ECO:0000255" key="1">
    <source>
        <dbReference type="HAMAP-Rule" id="MF_00382"/>
    </source>
</evidence>
<evidence type="ECO:0000305" key="2"/>
<protein>
    <recommendedName>
        <fullName evidence="1">Large ribosomal subunit protein bL20</fullName>
    </recommendedName>
    <alternativeName>
        <fullName evidence="2">50S ribosomal protein L20</fullName>
    </alternativeName>
</protein>
<gene>
    <name evidence="1" type="primary">rplT</name>
    <name type="ordered locus">CPF_2144</name>
</gene>
<proteinExistence type="inferred from homology"/>
<name>RL20_CLOP1</name>
<feature type="chain" id="PRO_1000048962" description="Large ribosomal subunit protein bL20">
    <location>
        <begin position="1"/>
        <end position="119"/>
    </location>
</feature>
<organism>
    <name type="scientific">Clostridium perfringens (strain ATCC 13124 / DSM 756 / JCM 1290 / NCIMB 6125 / NCTC 8237 / Type A)</name>
    <dbReference type="NCBI Taxonomy" id="195103"/>
    <lineage>
        <taxon>Bacteria</taxon>
        <taxon>Bacillati</taxon>
        <taxon>Bacillota</taxon>
        <taxon>Clostridia</taxon>
        <taxon>Eubacteriales</taxon>
        <taxon>Clostridiaceae</taxon>
        <taxon>Clostridium</taxon>
    </lineage>
</organism>
<comment type="function">
    <text evidence="1">Binds directly to 23S ribosomal RNA and is necessary for the in vitro assembly process of the 50S ribosomal subunit. It is not involved in the protein synthesizing functions of that subunit.</text>
</comment>
<comment type="similarity">
    <text evidence="1">Belongs to the bacterial ribosomal protein bL20 family.</text>
</comment>
<sequence>MARVKRAVNARKNHKKVLKLAKGYYGGKSKLFKTANESVIRALRNAYVGRRLKKRDYRRLWIARINAATRMNGLSYSRFMNGMKLAGVDINRKMLSEIAINDPKAFADLVELAKKHLNA</sequence>
<accession>Q0TP68</accession>
<dbReference type="EMBL" id="CP000246">
    <property type="protein sequence ID" value="ABG84109.1"/>
    <property type="molecule type" value="Genomic_DNA"/>
</dbReference>
<dbReference type="RefSeq" id="WP_003451332.1">
    <property type="nucleotide sequence ID" value="NC_008261.1"/>
</dbReference>
<dbReference type="SMR" id="Q0TP68"/>
<dbReference type="STRING" id="195103.CPF_2144"/>
<dbReference type="PaxDb" id="195103-CPF_2144"/>
<dbReference type="GeneID" id="93001575"/>
<dbReference type="KEGG" id="cpf:CPF_2144"/>
<dbReference type="eggNOG" id="COG0292">
    <property type="taxonomic scope" value="Bacteria"/>
</dbReference>
<dbReference type="HOGENOM" id="CLU_123265_0_1_9"/>
<dbReference type="Proteomes" id="UP000001823">
    <property type="component" value="Chromosome"/>
</dbReference>
<dbReference type="GO" id="GO:1990904">
    <property type="term" value="C:ribonucleoprotein complex"/>
    <property type="evidence" value="ECO:0007669"/>
    <property type="project" value="UniProtKB-KW"/>
</dbReference>
<dbReference type="GO" id="GO:0005840">
    <property type="term" value="C:ribosome"/>
    <property type="evidence" value="ECO:0007669"/>
    <property type="project" value="UniProtKB-KW"/>
</dbReference>
<dbReference type="GO" id="GO:0019843">
    <property type="term" value="F:rRNA binding"/>
    <property type="evidence" value="ECO:0007669"/>
    <property type="project" value="UniProtKB-UniRule"/>
</dbReference>
<dbReference type="GO" id="GO:0003735">
    <property type="term" value="F:structural constituent of ribosome"/>
    <property type="evidence" value="ECO:0007669"/>
    <property type="project" value="InterPro"/>
</dbReference>
<dbReference type="GO" id="GO:0000027">
    <property type="term" value="P:ribosomal large subunit assembly"/>
    <property type="evidence" value="ECO:0007669"/>
    <property type="project" value="UniProtKB-UniRule"/>
</dbReference>
<dbReference type="GO" id="GO:0006412">
    <property type="term" value="P:translation"/>
    <property type="evidence" value="ECO:0007669"/>
    <property type="project" value="InterPro"/>
</dbReference>
<dbReference type="CDD" id="cd07026">
    <property type="entry name" value="Ribosomal_L20"/>
    <property type="match status" value="1"/>
</dbReference>
<dbReference type="FunFam" id="1.10.1900.20:FF:000001">
    <property type="entry name" value="50S ribosomal protein L20"/>
    <property type="match status" value="1"/>
</dbReference>
<dbReference type="Gene3D" id="6.10.160.10">
    <property type="match status" value="1"/>
</dbReference>
<dbReference type="Gene3D" id="1.10.1900.20">
    <property type="entry name" value="Ribosomal protein L20"/>
    <property type="match status" value="1"/>
</dbReference>
<dbReference type="HAMAP" id="MF_00382">
    <property type="entry name" value="Ribosomal_bL20"/>
    <property type="match status" value="1"/>
</dbReference>
<dbReference type="InterPro" id="IPR005813">
    <property type="entry name" value="Ribosomal_bL20"/>
</dbReference>
<dbReference type="InterPro" id="IPR049946">
    <property type="entry name" value="RIBOSOMAL_L20_CS"/>
</dbReference>
<dbReference type="InterPro" id="IPR035566">
    <property type="entry name" value="Ribosomal_protein_bL20_C"/>
</dbReference>
<dbReference type="NCBIfam" id="TIGR01032">
    <property type="entry name" value="rplT_bact"/>
    <property type="match status" value="1"/>
</dbReference>
<dbReference type="PANTHER" id="PTHR10986">
    <property type="entry name" value="39S RIBOSOMAL PROTEIN L20"/>
    <property type="match status" value="1"/>
</dbReference>
<dbReference type="Pfam" id="PF00453">
    <property type="entry name" value="Ribosomal_L20"/>
    <property type="match status" value="1"/>
</dbReference>
<dbReference type="PRINTS" id="PR00062">
    <property type="entry name" value="RIBOSOMALL20"/>
</dbReference>
<dbReference type="SUPFAM" id="SSF74731">
    <property type="entry name" value="Ribosomal protein L20"/>
    <property type="match status" value="1"/>
</dbReference>
<dbReference type="PROSITE" id="PS00937">
    <property type="entry name" value="RIBOSOMAL_L20"/>
    <property type="match status" value="1"/>
</dbReference>